<organism>
    <name type="scientific">Streptococcus gordonii (strain Challis / ATCC 35105 / BCRC 15272 / CH1 / DL1 / V288)</name>
    <dbReference type="NCBI Taxonomy" id="467705"/>
    <lineage>
        <taxon>Bacteria</taxon>
        <taxon>Bacillati</taxon>
        <taxon>Bacillota</taxon>
        <taxon>Bacilli</taxon>
        <taxon>Lactobacillales</taxon>
        <taxon>Streptococcaceae</taxon>
        <taxon>Streptococcus</taxon>
    </lineage>
</organism>
<reference key="1">
    <citation type="journal article" date="2007" name="J. Bacteriol.">
        <title>Genome-wide transcriptional changes in Streptococcus gordonii in response to competence signaling peptide.</title>
        <authorList>
            <person name="Vickerman M.M."/>
            <person name="Iobst S."/>
            <person name="Jesionowski A.M."/>
            <person name="Gill S.R."/>
        </authorList>
    </citation>
    <scope>NUCLEOTIDE SEQUENCE [LARGE SCALE GENOMIC DNA]</scope>
    <source>
        <strain>Challis / ATCC 35105 / BCRC 15272 / CH1 / DL1 / V288</strain>
    </source>
</reference>
<protein>
    <recommendedName>
        <fullName evidence="1">Large ribosomal subunit protein uL30</fullName>
    </recommendedName>
    <alternativeName>
        <fullName evidence="2">50S ribosomal protein L30</fullName>
    </alternativeName>
</protein>
<proteinExistence type="inferred from homology"/>
<comment type="subunit">
    <text evidence="1">Part of the 50S ribosomal subunit.</text>
</comment>
<comment type="similarity">
    <text evidence="1">Belongs to the universal ribosomal protein uL30 family.</text>
</comment>
<comment type="sequence caution" evidence="2">
    <conflict type="erroneous initiation">
        <sequence resource="EMBL-CDS" id="ABV10788"/>
    </conflict>
</comment>
<keyword id="KW-1185">Reference proteome</keyword>
<keyword id="KW-0687">Ribonucleoprotein</keyword>
<keyword id="KW-0689">Ribosomal protein</keyword>
<evidence type="ECO:0000255" key="1">
    <source>
        <dbReference type="HAMAP-Rule" id="MF_01371"/>
    </source>
</evidence>
<evidence type="ECO:0000305" key="2"/>
<sequence>MAQIKITLTKSPIGRIPSQRKTVVALGLGKLNSSVIKEDNPAVRGMITAVSHLVTVEEVK</sequence>
<dbReference type="EMBL" id="CP000725">
    <property type="protein sequence ID" value="ABV10788.1"/>
    <property type="status" value="ALT_INIT"/>
    <property type="molecule type" value="Genomic_DNA"/>
</dbReference>
<dbReference type="RefSeq" id="WP_002894509.1">
    <property type="nucleotide sequence ID" value="NC_009785.1"/>
</dbReference>
<dbReference type="SMR" id="A8AZK7"/>
<dbReference type="STRING" id="467705.SGO_1967"/>
<dbReference type="GeneID" id="93964219"/>
<dbReference type="KEGG" id="sgo:SGO_1967"/>
<dbReference type="eggNOG" id="COG1841">
    <property type="taxonomic scope" value="Bacteria"/>
</dbReference>
<dbReference type="HOGENOM" id="CLU_131047_2_1_9"/>
<dbReference type="Proteomes" id="UP000001131">
    <property type="component" value="Chromosome"/>
</dbReference>
<dbReference type="GO" id="GO:0022625">
    <property type="term" value="C:cytosolic large ribosomal subunit"/>
    <property type="evidence" value="ECO:0007669"/>
    <property type="project" value="TreeGrafter"/>
</dbReference>
<dbReference type="GO" id="GO:0003735">
    <property type="term" value="F:structural constituent of ribosome"/>
    <property type="evidence" value="ECO:0007669"/>
    <property type="project" value="InterPro"/>
</dbReference>
<dbReference type="GO" id="GO:0006412">
    <property type="term" value="P:translation"/>
    <property type="evidence" value="ECO:0007669"/>
    <property type="project" value="UniProtKB-UniRule"/>
</dbReference>
<dbReference type="CDD" id="cd01658">
    <property type="entry name" value="Ribosomal_L30"/>
    <property type="match status" value="1"/>
</dbReference>
<dbReference type="FunFam" id="3.30.1390.20:FF:000001">
    <property type="entry name" value="50S ribosomal protein L30"/>
    <property type="match status" value="1"/>
</dbReference>
<dbReference type="Gene3D" id="3.30.1390.20">
    <property type="entry name" value="Ribosomal protein L30, ferredoxin-like fold domain"/>
    <property type="match status" value="1"/>
</dbReference>
<dbReference type="HAMAP" id="MF_01371_B">
    <property type="entry name" value="Ribosomal_uL30_B"/>
    <property type="match status" value="1"/>
</dbReference>
<dbReference type="InterPro" id="IPR036919">
    <property type="entry name" value="Ribo_uL30_ferredoxin-like_sf"/>
</dbReference>
<dbReference type="InterPro" id="IPR005996">
    <property type="entry name" value="Ribosomal_uL30_bac-type"/>
</dbReference>
<dbReference type="InterPro" id="IPR018038">
    <property type="entry name" value="Ribosomal_uL30_CS"/>
</dbReference>
<dbReference type="InterPro" id="IPR016082">
    <property type="entry name" value="Ribosomal_uL30_ferredoxin-like"/>
</dbReference>
<dbReference type="NCBIfam" id="TIGR01308">
    <property type="entry name" value="rpmD_bact"/>
    <property type="match status" value="1"/>
</dbReference>
<dbReference type="PANTHER" id="PTHR15892:SF2">
    <property type="entry name" value="LARGE RIBOSOMAL SUBUNIT PROTEIN UL30M"/>
    <property type="match status" value="1"/>
</dbReference>
<dbReference type="PANTHER" id="PTHR15892">
    <property type="entry name" value="MITOCHONDRIAL RIBOSOMAL PROTEIN L30"/>
    <property type="match status" value="1"/>
</dbReference>
<dbReference type="Pfam" id="PF00327">
    <property type="entry name" value="Ribosomal_L30"/>
    <property type="match status" value="1"/>
</dbReference>
<dbReference type="PIRSF" id="PIRSF002211">
    <property type="entry name" value="Ribosomal_L30_bac-type"/>
    <property type="match status" value="1"/>
</dbReference>
<dbReference type="SUPFAM" id="SSF55129">
    <property type="entry name" value="Ribosomal protein L30p/L7e"/>
    <property type="match status" value="1"/>
</dbReference>
<dbReference type="PROSITE" id="PS00634">
    <property type="entry name" value="RIBOSOMAL_L30"/>
    <property type="match status" value="1"/>
</dbReference>
<name>RL30_STRGC</name>
<feature type="chain" id="PRO_0000347148" description="Large ribosomal subunit protein uL30">
    <location>
        <begin position="1"/>
        <end position="60"/>
    </location>
</feature>
<accession>A8AZK7</accession>
<gene>
    <name evidence="1" type="primary">rpmD</name>
    <name type="ordered locus">SGO_1967</name>
</gene>